<proteinExistence type="inferred from homology"/>
<accession>A6LPC8</accession>
<evidence type="ECO:0000255" key="1">
    <source>
        <dbReference type="HAMAP-Rule" id="MF_00663"/>
    </source>
</evidence>
<protein>
    <recommendedName>
        <fullName evidence="1">Phosphatidylserine decarboxylase proenzyme</fullName>
        <ecNumber evidence="1">4.1.1.65</ecNumber>
    </recommendedName>
    <component>
        <recommendedName>
            <fullName evidence="1">Phosphatidylserine decarboxylase alpha chain</fullName>
        </recommendedName>
    </component>
    <component>
        <recommendedName>
            <fullName evidence="1">Phosphatidylserine decarboxylase beta chain</fullName>
        </recommendedName>
    </component>
</protein>
<keyword id="KW-1003">Cell membrane</keyword>
<keyword id="KW-0210">Decarboxylase</keyword>
<keyword id="KW-0444">Lipid biosynthesis</keyword>
<keyword id="KW-0443">Lipid metabolism</keyword>
<keyword id="KW-0456">Lyase</keyword>
<keyword id="KW-0472">Membrane</keyword>
<keyword id="KW-0594">Phospholipid biosynthesis</keyword>
<keyword id="KW-1208">Phospholipid metabolism</keyword>
<keyword id="KW-0670">Pyruvate</keyword>
<keyword id="KW-0865">Zymogen</keyword>
<sequence>MIQVYNRTTKSYEEELIAGKKYIEWTYESPVGKTITELIAKKKLFSKLYGKYCDTKLSKSKISPFVDSFNIDMAMSKKKINEFKSFNDFFTRELNFDARPINSDNNILISPGDGRITAYEDIDLDNIIQIKGLTYSLKELINDDNVASKYKNGICVVLRLCPTDYHRFHFIDSGIPYENHPIKGHYYSVNPIALKSVPKLFCENKREWSLFKSDNFKDVLHIEVGATCVGSIIQTYSPRVRVNKGDEKGYFKFGGSTTILFFEQGSIEIDADIIEQSKLGFECKVIFGENIGTKVL</sequence>
<organism>
    <name type="scientific">Clostridium beijerinckii (strain ATCC 51743 / NCIMB 8052)</name>
    <name type="common">Clostridium acetobutylicum</name>
    <dbReference type="NCBI Taxonomy" id="290402"/>
    <lineage>
        <taxon>Bacteria</taxon>
        <taxon>Bacillati</taxon>
        <taxon>Bacillota</taxon>
        <taxon>Clostridia</taxon>
        <taxon>Eubacteriales</taxon>
        <taxon>Clostridiaceae</taxon>
        <taxon>Clostridium</taxon>
    </lineage>
</organism>
<dbReference type="EC" id="4.1.1.65" evidence="1"/>
<dbReference type="EMBL" id="CP000721">
    <property type="protein sequence ID" value="ABR32208.1"/>
    <property type="molecule type" value="Genomic_DNA"/>
</dbReference>
<dbReference type="RefSeq" id="WP_011967383.1">
    <property type="nucleotide sequence ID" value="NC_009617.1"/>
</dbReference>
<dbReference type="SMR" id="A6LPC8"/>
<dbReference type="KEGG" id="cbe:Cbei_0018"/>
<dbReference type="eggNOG" id="COG0688">
    <property type="taxonomic scope" value="Bacteria"/>
</dbReference>
<dbReference type="HOGENOM" id="CLU_029061_2_2_9"/>
<dbReference type="UniPathway" id="UPA00558">
    <property type="reaction ID" value="UER00616"/>
</dbReference>
<dbReference type="Proteomes" id="UP000000565">
    <property type="component" value="Chromosome"/>
</dbReference>
<dbReference type="GO" id="GO:0005886">
    <property type="term" value="C:plasma membrane"/>
    <property type="evidence" value="ECO:0007669"/>
    <property type="project" value="UniProtKB-SubCell"/>
</dbReference>
<dbReference type="GO" id="GO:0004609">
    <property type="term" value="F:phosphatidylserine decarboxylase activity"/>
    <property type="evidence" value="ECO:0007669"/>
    <property type="project" value="UniProtKB-UniRule"/>
</dbReference>
<dbReference type="GO" id="GO:0006646">
    <property type="term" value="P:phosphatidylethanolamine biosynthetic process"/>
    <property type="evidence" value="ECO:0007669"/>
    <property type="project" value="UniProtKB-UniRule"/>
</dbReference>
<dbReference type="HAMAP" id="MF_00663">
    <property type="entry name" value="PS_decarb_PSD_B_type2"/>
    <property type="match status" value="1"/>
</dbReference>
<dbReference type="InterPro" id="IPR003817">
    <property type="entry name" value="PS_Dcarbxylase"/>
</dbReference>
<dbReference type="InterPro" id="IPR033177">
    <property type="entry name" value="PSD-B"/>
</dbReference>
<dbReference type="InterPro" id="IPR033179">
    <property type="entry name" value="PSD_type2_pro"/>
</dbReference>
<dbReference type="NCBIfam" id="NF001941">
    <property type="entry name" value="PRK00723.1"/>
    <property type="match status" value="1"/>
</dbReference>
<dbReference type="NCBIfam" id="TIGR00163">
    <property type="entry name" value="PS_decarb"/>
    <property type="match status" value="1"/>
</dbReference>
<dbReference type="PANTHER" id="PTHR10067">
    <property type="entry name" value="PHOSPHATIDYLSERINE DECARBOXYLASE"/>
    <property type="match status" value="1"/>
</dbReference>
<dbReference type="PANTHER" id="PTHR10067:SF17">
    <property type="entry name" value="PHOSPHATIDYLSERINE DECARBOXYLASE PROENZYME 2"/>
    <property type="match status" value="1"/>
</dbReference>
<dbReference type="Pfam" id="PF02666">
    <property type="entry name" value="PS_Dcarbxylase"/>
    <property type="match status" value="1"/>
</dbReference>
<name>PSD_CLOB8</name>
<feature type="chain" id="PRO_1000082910" description="Phosphatidylserine decarboxylase beta chain" evidence="1">
    <location>
        <begin position="1"/>
        <end position="255"/>
    </location>
</feature>
<feature type="chain" id="PRO_1000082911" description="Phosphatidylserine decarboxylase alpha chain" evidence="1">
    <location>
        <begin position="256"/>
        <end position="296"/>
    </location>
</feature>
<feature type="active site" description="Charge relay system; for autoendoproteolytic cleavage activity" evidence="1">
    <location>
        <position position="113"/>
    </location>
</feature>
<feature type="active site" description="Charge relay system; for autoendoproteolytic cleavage activity" evidence="1">
    <location>
        <position position="169"/>
    </location>
</feature>
<feature type="active site" description="Charge relay system; for autoendoproteolytic cleavage activity" evidence="1">
    <location>
        <position position="256"/>
    </location>
</feature>
<feature type="active site" description="Schiff-base intermediate with substrate; via pyruvic acid; for decarboxylase activity" evidence="1">
    <location>
        <position position="256"/>
    </location>
</feature>
<feature type="site" description="Cleavage (non-hydrolytic); by autocatalysis" evidence="1">
    <location>
        <begin position="255"/>
        <end position="256"/>
    </location>
</feature>
<feature type="modified residue" description="Pyruvic acid (Ser); by autocatalysis" evidence="1">
    <location>
        <position position="256"/>
    </location>
</feature>
<reference key="1">
    <citation type="submission" date="2007-06" db="EMBL/GenBank/DDBJ databases">
        <title>Complete sequence of Clostridium beijerinckii NCIMB 8052.</title>
        <authorList>
            <consortium name="US DOE Joint Genome Institute"/>
            <person name="Copeland A."/>
            <person name="Lucas S."/>
            <person name="Lapidus A."/>
            <person name="Barry K."/>
            <person name="Detter J.C."/>
            <person name="Glavina del Rio T."/>
            <person name="Hammon N."/>
            <person name="Israni S."/>
            <person name="Dalin E."/>
            <person name="Tice H."/>
            <person name="Pitluck S."/>
            <person name="Sims D."/>
            <person name="Brettin T."/>
            <person name="Bruce D."/>
            <person name="Tapia R."/>
            <person name="Brainard J."/>
            <person name="Schmutz J."/>
            <person name="Larimer F."/>
            <person name="Land M."/>
            <person name="Hauser L."/>
            <person name="Kyrpides N."/>
            <person name="Mikhailova N."/>
            <person name="Bennet G."/>
            <person name="Cann I."/>
            <person name="Chen J.-S."/>
            <person name="Contreras A.L."/>
            <person name="Jones D."/>
            <person name="Kashket E."/>
            <person name="Mitchell W."/>
            <person name="Stoddard S."/>
            <person name="Schwarz W."/>
            <person name="Qureshi N."/>
            <person name="Young M."/>
            <person name="Shi Z."/>
            <person name="Ezeji T."/>
            <person name="White B."/>
            <person name="Blaschek H."/>
            <person name="Richardson P."/>
        </authorList>
    </citation>
    <scope>NUCLEOTIDE SEQUENCE [LARGE SCALE GENOMIC DNA]</scope>
    <source>
        <strain>ATCC 51743 / NCIMB 8052</strain>
    </source>
</reference>
<comment type="function">
    <text evidence="1">Catalyzes the formation of phosphatidylethanolamine (PtdEtn) from phosphatidylserine (PtdSer).</text>
</comment>
<comment type="catalytic activity">
    <reaction evidence="1">
        <text>a 1,2-diacyl-sn-glycero-3-phospho-L-serine + H(+) = a 1,2-diacyl-sn-glycero-3-phosphoethanolamine + CO2</text>
        <dbReference type="Rhea" id="RHEA:20828"/>
        <dbReference type="ChEBI" id="CHEBI:15378"/>
        <dbReference type="ChEBI" id="CHEBI:16526"/>
        <dbReference type="ChEBI" id="CHEBI:57262"/>
        <dbReference type="ChEBI" id="CHEBI:64612"/>
        <dbReference type="EC" id="4.1.1.65"/>
    </reaction>
</comment>
<comment type="cofactor">
    <cofactor evidence="1">
        <name>pyruvate</name>
        <dbReference type="ChEBI" id="CHEBI:15361"/>
    </cofactor>
    <text evidence="1">Binds 1 pyruvoyl group covalently per subunit.</text>
</comment>
<comment type="pathway">
    <text evidence="1">Phospholipid metabolism; phosphatidylethanolamine biosynthesis; phosphatidylethanolamine from CDP-diacylglycerol: step 2/2.</text>
</comment>
<comment type="subunit">
    <text evidence="1">Heterodimer of a large membrane-associated beta subunit and a small pyruvoyl-containing alpha subunit.</text>
</comment>
<comment type="subcellular location">
    <subcellularLocation>
        <location evidence="1">Cell membrane</location>
        <topology evidence="1">Peripheral membrane protein</topology>
    </subcellularLocation>
</comment>
<comment type="PTM">
    <text evidence="1">Is synthesized initially as an inactive proenzyme. Formation of the active enzyme involves a self-maturation process in which the active site pyruvoyl group is generated from an internal serine residue via an autocatalytic post-translational modification. Two non-identical subunits are generated from the proenzyme in this reaction, and the pyruvate is formed at the N-terminus of the alpha chain, which is derived from the carboxyl end of the proenzyme. The autoendoproteolytic cleavage occurs by a canonical serine protease mechanism, in which the side chain hydroxyl group of the serine supplies its oxygen atom to form the C-terminus of the beta chain, while the remainder of the serine residue undergoes an oxidative deamination to produce ammonia and the pyruvoyl prosthetic group on the alpha chain. During this reaction, the Ser that is part of the protease active site of the proenzyme becomes the pyruvoyl prosthetic group, which constitutes an essential element of the active site of the mature decarboxylase.</text>
</comment>
<comment type="similarity">
    <text evidence="1">Belongs to the phosphatidylserine decarboxylase family. PSD-B subfamily. Prokaryotic type II sub-subfamily.</text>
</comment>
<gene>
    <name evidence="1" type="primary">psd</name>
    <name type="ordered locus">Cbei_0018</name>
</gene>